<reference key="1">
    <citation type="journal article" date="1990" name="Oncogene">
        <title>The nucleotide sequence of a cDNA encoding an EGF-inducible gene indicates the existence of a new family of mitogen-induced genes.</title>
        <authorList>
            <person name="Gomperts M."/>
            <person name="Pascall J.C."/>
            <person name="Brown K.D."/>
        </authorList>
    </citation>
    <scope>NUCLEOTIDE SEQUENCE [MRNA]</scope>
    <source>
        <strain>Wistar</strain>
    </source>
</reference>
<reference key="2">
    <citation type="journal article" date="1995" name="Biochem. J.">
        <title>Identification of a functional promoter element in the 5'-flanking region of the rat cMG1/TIS11b gene.</title>
        <authorList>
            <person name="Corps A.N."/>
            <person name="Pascall J.C."/>
            <person name="Hadfield K.M."/>
            <person name="Brown K.D."/>
        </authorList>
    </citation>
    <scope>NUCLEOTIDE SEQUENCE [GENOMIC DNA] OF 1-19</scope>
</reference>
<reference key="3">
    <citation type="journal article" date="2000" name="J. Biol. Chem.">
        <title>Interactions of CCCH zinc finger proteins with mRNA. Binding of tristetraprolin-related zinc finger proteins to Au-rich elements and destabilization of mRNA.</title>
        <authorList>
            <person name="Lai W.S."/>
            <person name="Carballo E."/>
            <person name="Thorn J.M."/>
            <person name="Kennington E.A."/>
            <person name="Blackshear P.J."/>
        </authorList>
    </citation>
    <scope>FUNCTION</scope>
    <scope>RNA-BINDING</scope>
    <scope>INDUCTION</scope>
</reference>
<reference key="4">
    <citation type="journal article" date="2001" name="J. Biol. Chem.">
        <title>Interactions of CCCH zinc finger proteins with mRNA: tristetraprolin-mediated AU-rich element-dependent mRNA degradation can occur in the absence of a poly(A) tail.</title>
        <authorList>
            <person name="Lai W.S."/>
            <person name="Blackshear P.J."/>
        </authorList>
    </citation>
    <scope>FUNCTION</scope>
</reference>
<reference key="5">
    <citation type="journal article" date="2003" name="Mol. Cell. Biol.">
        <title>Tristetraprolin and its family members can promote the cell-free deadenylation of AU-rich element-containing mRNAs by poly(A) ribonuclease.</title>
        <authorList>
            <person name="Lai W.S."/>
            <person name="Kennington E.A."/>
            <person name="Blackshear P.J."/>
        </authorList>
    </citation>
    <scope>FUNCTION</scope>
    <scope>RNA-BINDING</scope>
</reference>
<reference key="6">
    <citation type="journal article" date="2004" name="EMBO J.">
        <title>The ARE-dependent mRNA-destabilizing activity of BRF1 is regulated by protein kinase B.</title>
        <authorList>
            <person name="Schmidlin M."/>
            <person name="Lu M."/>
            <person name="Leuenberger S.A."/>
            <person name="Stoecklin G."/>
            <person name="Mallaun M."/>
            <person name="Gross B."/>
            <person name="Gherzi R."/>
            <person name="Hess D."/>
            <person name="Hemmings B.A."/>
            <person name="Moroni C."/>
        </authorList>
    </citation>
    <scope>PHOSPHORYLATION AT SER-92</scope>
</reference>
<name>TISB_RAT</name>
<organism>
    <name type="scientific">Rattus norvegicus</name>
    <name type="common">Rat</name>
    <dbReference type="NCBI Taxonomy" id="10116"/>
    <lineage>
        <taxon>Eukaryota</taxon>
        <taxon>Metazoa</taxon>
        <taxon>Chordata</taxon>
        <taxon>Craniata</taxon>
        <taxon>Vertebrata</taxon>
        <taxon>Euteleostomi</taxon>
        <taxon>Mammalia</taxon>
        <taxon>Eutheria</taxon>
        <taxon>Euarchontoglires</taxon>
        <taxon>Glires</taxon>
        <taxon>Rodentia</taxon>
        <taxon>Myomorpha</taxon>
        <taxon>Muroidea</taxon>
        <taxon>Muridae</taxon>
        <taxon>Murinae</taxon>
        <taxon>Rattus</taxon>
    </lineage>
</organism>
<feature type="chain" id="PRO_0000089169" description="mRNA decay activator protein ZFP36L1">
    <location>
        <begin position="1"/>
        <end position="338"/>
    </location>
</feature>
<feature type="zinc finger region" description="C3H1-type 1" evidence="3">
    <location>
        <begin position="114"/>
        <end position="142"/>
    </location>
</feature>
<feature type="zinc finger region" description="C3H1-type 2" evidence="3">
    <location>
        <begin position="152"/>
        <end position="180"/>
    </location>
</feature>
<feature type="region of interest" description="Necessary and sufficient for the association with mRNA decay enzymes and mRNA decay activation" evidence="2">
    <location>
        <begin position="1"/>
        <end position="111"/>
    </location>
</feature>
<feature type="region of interest" description="Disordered" evidence="4">
    <location>
        <begin position="93"/>
        <end position="113"/>
    </location>
</feature>
<feature type="region of interest" description="Necessary for mRNA decay activation" evidence="2">
    <location>
        <begin position="185"/>
        <end position="338"/>
    </location>
</feature>
<feature type="region of interest" description="Disordered" evidence="4">
    <location>
        <begin position="273"/>
        <end position="338"/>
    </location>
</feature>
<feature type="compositionally biased region" description="Polar residues" evidence="4">
    <location>
        <begin position="101"/>
        <end position="113"/>
    </location>
</feature>
<feature type="compositionally biased region" description="Low complexity" evidence="4">
    <location>
        <begin position="305"/>
        <end position="318"/>
    </location>
</feature>
<feature type="modified residue" description="Phosphoserine; by MAPKAPK2" evidence="2">
    <location>
        <position position="54"/>
    </location>
</feature>
<feature type="modified residue" description="Phosphoserine; by PKB/AKT1" evidence="2">
    <location>
        <position position="90"/>
    </location>
</feature>
<feature type="modified residue" description="Phosphoserine; by PKB/AKT1 and MAPKAPK2" evidence="8">
    <location>
        <position position="92"/>
    </location>
</feature>
<feature type="modified residue" description="Phosphoserine; by PKB/AKT1 and MAPKAPK2" evidence="2">
    <location>
        <position position="203"/>
    </location>
</feature>
<feature type="modified residue" description="Phosphoserine" evidence="2">
    <location>
        <position position="318"/>
    </location>
</feature>
<feature type="modified residue" description="Phosphoserine; by RPS6KA1" evidence="2">
    <location>
        <position position="334"/>
    </location>
</feature>
<gene>
    <name evidence="11" type="primary">Zfp36l1</name>
    <name evidence="2" type="synonym">Brf1</name>
    <name evidence="9" type="synonym">Cmg1</name>
    <name evidence="9" type="synonym">Tis11b</name>
</gene>
<keyword id="KW-0963">Cytoplasm</keyword>
<keyword id="KW-0217">Developmental protein</keyword>
<keyword id="KW-0238">DNA-binding</keyword>
<keyword id="KW-0479">Metal-binding</keyword>
<keyword id="KW-0507">mRNA processing</keyword>
<keyword id="KW-0509">mRNA transport</keyword>
<keyword id="KW-0539">Nucleus</keyword>
<keyword id="KW-0597">Phosphoprotein</keyword>
<keyword id="KW-1185">Reference proteome</keyword>
<keyword id="KW-0677">Repeat</keyword>
<keyword id="KW-0687">Ribonucleoprotein</keyword>
<keyword id="KW-0694">RNA-binding</keyword>
<keyword id="KW-0813">Transport</keyword>
<keyword id="KW-0832">Ubl conjugation</keyword>
<keyword id="KW-0862">Zinc</keyword>
<keyword id="KW-0863">Zinc-finger</keyword>
<dbReference type="EMBL" id="X52590">
    <property type="protein sequence ID" value="CAA36826.1"/>
    <property type="molecule type" value="mRNA"/>
</dbReference>
<dbReference type="EMBL" id="X86571">
    <property type="protein sequence ID" value="CAA60379.1"/>
    <property type="molecule type" value="Genomic_DNA"/>
</dbReference>
<dbReference type="PIR" id="S10471">
    <property type="entry name" value="S10471"/>
</dbReference>
<dbReference type="RefSeq" id="NP_058868.1">
    <property type="nucleotide sequence ID" value="NM_017172.3"/>
</dbReference>
<dbReference type="RefSeq" id="XP_063117647.1">
    <property type="nucleotide sequence ID" value="XM_063261577.1"/>
</dbReference>
<dbReference type="SMR" id="P17431"/>
<dbReference type="FunCoup" id="P17431">
    <property type="interactions" value="1044"/>
</dbReference>
<dbReference type="MINT" id="P17431"/>
<dbReference type="STRING" id="10116.ENSRNOP00000075412"/>
<dbReference type="iPTMnet" id="P17431"/>
<dbReference type="PhosphoSitePlus" id="P17431"/>
<dbReference type="PaxDb" id="10116-ENSRNOP00000051546"/>
<dbReference type="Ensembl" id="ENSRNOT00000083677.2">
    <property type="protein sequence ID" value="ENSRNOP00000075412.1"/>
    <property type="gene ID" value="ENSRNOG00000058646.2"/>
</dbReference>
<dbReference type="GeneID" id="29344"/>
<dbReference type="KEGG" id="rno:29344"/>
<dbReference type="UCSC" id="RGD:62009">
    <property type="organism name" value="rat"/>
</dbReference>
<dbReference type="AGR" id="RGD:62009"/>
<dbReference type="CTD" id="677"/>
<dbReference type="RGD" id="62009">
    <property type="gene designation" value="Zfp36l1"/>
</dbReference>
<dbReference type="eggNOG" id="KOG1677">
    <property type="taxonomic scope" value="Eukaryota"/>
</dbReference>
<dbReference type="GeneTree" id="ENSGT00940000155076"/>
<dbReference type="HOGENOM" id="CLU_033040_1_0_1"/>
<dbReference type="InParanoid" id="P17431"/>
<dbReference type="OMA" id="YYFRPMS"/>
<dbReference type="OrthoDB" id="410307at2759"/>
<dbReference type="PhylomeDB" id="P17431"/>
<dbReference type="Reactome" id="R-RNO-450385">
    <property type="pathway name" value="Butyrate Response Factor 1 (BRF1) binds and destabilizes mRNA"/>
</dbReference>
<dbReference type="PRO" id="PR:P17431"/>
<dbReference type="Proteomes" id="UP000002494">
    <property type="component" value="Chromosome 6"/>
</dbReference>
<dbReference type="Bgee" id="ENSRNOG00000058646">
    <property type="expression patterns" value="Expressed in spleen and 19 other cell types or tissues"/>
</dbReference>
<dbReference type="GO" id="GO:0005737">
    <property type="term" value="C:cytoplasm"/>
    <property type="evidence" value="ECO:0000266"/>
    <property type="project" value="RGD"/>
</dbReference>
<dbReference type="GO" id="GO:0005829">
    <property type="term" value="C:cytosol"/>
    <property type="evidence" value="ECO:0000314"/>
    <property type="project" value="MGI"/>
</dbReference>
<dbReference type="GO" id="GO:0005634">
    <property type="term" value="C:nucleus"/>
    <property type="evidence" value="ECO:0000250"/>
    <property type="project" value="UniProtKB"/>
</dbReference>
<dbReference type="GO" id="GO:0000932">
    <property type="term" value="C:P-body"/>
    <property type="evidence" value="ECO:0000250"/>
    <property type="project" value="UniProtKB"/>
</dbReference>
<dbReference type="GO" id="GO:1990904">
    <property type="term" value="C:ribonucleoprotein complex"/>
    <property type="evidence" value="ECO:0000250"/>
    <property type="project" value="UniProtKB"/>
</dbReference>
<dbReference type="GO" id="GO:0071889">
    <property type="term" value="F:14-3-3 protein binding"/>
    <property type="evidence" value="ECO:0000250"/>
    <property type="project" value="UniProtKB"/>
</dbReference>
<dbReference type="GO" id="GO:0003677">
    <property type="term" value="F:DNA binding"/>
    <property type="evidence" value="ECO:0007669"/>
    <property type="project" value="UniProtKB-KW"/>
</dbReference>
<dbReference type="GO" id="GO:0035925">
    <property type="term" value="F:mRNA 3'-UTR AU-rich region binding"/>
    <property type="evidence" value="ECO:0000314"/>
    <property type="project" value="UniProtKB"/>
</dbReference>
<dbReference type="GO" id="GO:0003729">
    <property type="term" value="F:mRNA binding"/>
    <property type="evidence" value="ECO:0000314"/>
    <property type="project" value="MGI"/>
</dbReference>
<dbReference type="GO" id="GO:0008270">
    <property type="term" value="F:zinc ion binding"/>
    <property type="evidence" value="ECO:0007669"/>
    <property type="project" value="UniProtKB-KW"/>
</dbReference>
<dbReference type="GO" id="GO:0061158">
    <property type="term" value="P:3'-UTR-mediated mRNA destabilization"/>
    <property type="evidence" value="ECO:0000250"/>
    <property type="project" value="UniProtKB"/>
</dbReference>
<dbReference type="GO" id="GO:0006915">
    <property type="term" value="P:apoptotic process"/>
    <property type="evidence" value="ECO:0000266"/>
    <property type="project" value="RGD"/>
</dbReference>
<dbReference type="GO" id="GO:0008283">
    <property type="term" value="P:cell population proliferation"/>
    <property type="evidence" value="ECO:0000266"/>
    <property type="project" value="RGD"/>
</dbReference>
<dbReference type="GO" id="GO:0071320">
    <property type="term" value="P:cellular response to cAMP"/>
    <property type="evidence" value="ECO:0000266"/>
    <property type="project" value="RGD"/>
</dbReference>
<dbReference type="GO" id="GO:0071364">
    <property type="term" value="P:cellular response to epidermal growth factor stimulus"/>
    <property type="evidence" value="ECO:0000250"/>
    <property type="project" value="UniProtKB"/>
</dbReference>
<dbReference type="GO" id="GO:0044344">
    <property type="term" value="P:cellular response to fibroblast growth factor stimulus"/>
    <property type="evidence" value="ECO:0000250"/>
    <property type="project" value="UniProtKB"/>
</dbReference>
<dbReference type="GO" id="GO:0071385">
    <property type="term" value="P:cellular response to glucocorticoid stimulus"/>
    <property type="evidence" value="ECO:0000250"/>
    <property type="project" value="UniProtKB"/>
</dbReference>
<dbReference type="GO" id="GO:0071456">
    <property type="term" value="P:cellular response to hypoxia"/>
    <property type="evidence" value="ECO:0000250"/>
    <property type="project" value="UniProtKB"/>
</dbReference>
<dbReference type="GO" id="GO:0032869">
    <property type="term" value="P:cellular response to insulin stimulus"/>
    <property type="evidence" value="ECO:0000250"/>
    <property type="project" value="UniProtKB"/>
</dbReference>
<dbReference type="GO" id="GO:0071375">
    <property type="term" value="P:cellular response to peptide hormone stimulus"/>
    <property type="evidence" value="ECO:0000250"/>
    <property type="project" value="UniProtKB"/>
</dbReference>
<dbReference type="GO" id="GO:0097403">
    <property type="term" value="P:cellular response to raffinose"/>
    <property type="evidence" value="ECO:0000250"/>
    <property type="project" value="UniProtKB"/>
</dbReference>
<dbReference type="GO" id="GO:0071472">
    <property type="term" value="P:cellular response to salt stress"/>
    <property type="evidence" value="ECO:0000250"/>
    <property type="project" value="UniProtKB"/>
</dbReference>
<dbReference type="GO" id="GO:0071560">
    <property type="term" value="P:cellular response to transforming growth factor beta stimulus"/>
    <property type="evidence" value="ECO:0000250"/>
    <property type="project" value="UniProtKB"/>
</dbReference>
<dbReference type="GO" id="GO:0071356">
    <property type="term" value="P:cellular response to tumor necrosis factor"/>
    <property type="evidence" value="ECO:0000250"/>
    <property type="project" value="UniProtKB"/>
</dbReference>
<dbReference type="GO" id="GO:0060710">
    <property type="term" value="P:chorio-allantoic fusion"/>
    <property type="evidence" value="ECO:0000266"/>
    <property type="project" value="RGD"/>
</dbReference>
<dbReference type="GO" id="GO:0048568">
    <property type="term" value="P:embryonic organ development"/>
    <property type="evidence" value="ECO:0000266"/>
    <property type="project" value="RGD"/>
</dbReference>
<dbReference type="GO" id="GO:0070371">
    <property type="term" value="P:ERK1 and ERK2 cascade"/>
    <property type="evidence" value="ECO:0000250"/>
    <property type="project" value="UniProtKB"/>
</dbReference>
<dbReference type="GO" id="GO:0007507">
    <property type="term" value="P:heart development"/>
    <property type="evidence" value="ECO:0000266"/>
    <property type="project" value="RGD"/>
</dbReference>
<dbReference type="GO" id="GO:0000165">
    <property type="term" value="P:MAPK cascade"/>
    <property type="evidence" value="ECO:0000250"/>
    <property type="project" value="UniProtKB"/>
</dbReference>
<dbReference type="GO" id="GO:0048382">
    <property type="term" value="P:mesendoderm development"/>
    <property type="evidence" value="ECO:0000250"/>
    <property type="project" value="UniProtKB"/>
</dbReference>
<dbReference type="GO" id="GO:0006402">
    <property type="term" value="P:mRNA catabolic process"/>
    <property type="evidence" value="ECO:0000314"/>
    <property type="project" value="MGI"/>
</dbReference>
<dbReference type="GO" id="GO:0006397">
    <property type="term" value="P:mRNA processing"/>
    <property type="evidence" value="ECO:0007669"/>
    <property type="project" value="UniProtKB-KW"/>
</dbReference>
<dbReference type="GO" id="GO:0051028">
    <property type="term" value="P:mRNA transport"/>
    <property type="evidence" value="ECO:0000250"/>
    <property type="project" value="UniProtKB"/>
</dbReference>
<dbReference type="GO" id="GO:0035264">
    <property type="term" value="P:multicellular organism growth"/>
    <property type="evidence" value="ECO:0000266"/>
    <property type="project" value="RGD"/>
</dbReference>
<dbReference type="GO" id="GO:0045647">
    <property type="term" value="P:negative regulation of erythrocyte differentiation"/>
    <property type="evidence" value="ECO:0000250"/>
    <property type="project" value="UniProtKB"/>
</dbReference>
<dbReference type="GO" id="GO:1901991">
    <property type="term" value="P:negative regulation of mitotic cell cycle phase transition"/>
    <property type="evidence" value="ECO:0000250"/>
    <property type="project" value="UniProtKB"/>
</dbReference>
<dbReference type="GO" id="GO:0021915">
    <property type="term" value="P:neural tube development"/>
    <property type="evidence" value="ECO:0000266"/>
    <property type="project" value="RGD"/>
</dbReference>
<dbReference type="GO" id="GO:0000288">
    <property type="term" value="P:nuclear-transcribed mRNA catabolic process, deadenylation-dependent decay"/>
    <property type="evidence" value="ECO:0000266"/>
    <property type="project" value="RGD"/>
</dbReference>
<dbReference type="GO" id="GO:0031086">
    <property type="term" value="P:nuclear-transcribed mRNA catabolic process, deadenylation-independent decay"/>
    <property type="evidence" value="ECO:0000314"/>
    <property type="project" value="UniProtKB"/>
</dbReference>
<dbReference type="GO" id="GO:0038066">
    <property type="term" value="P:p38MAPK cascade"/>
    <property type="evidence" value="ECO:0000250"/>
    <property type="project" value="UniProtKB"/>
</dbReference>
<dbReference type="GO" id="GO:0043491">
    <property type="term" value="P:phosphatidylinositol 3-kinase/protein kinase B signal transduction"/>
    <property type="evidence" value="ECO:0000250"/>
    <property type="project" value="UniProtKB"/>
</dbReference>
<dbReference type="GO" id="GO:0045600">
    <property type="term" value="P:positive regulation of fat cell differentiation"/>
    <property type="evidence" value="ECO:0000250"/>
    <property type="project" value="UniProtKB"/>
</dbReference>
<dbReference type="GO" id="GO:1904582">
    <property type="term" value="P:positive regulation of intracellular mRNA localization"/>
    <property type="evidence" value="ECO:0000250"/>
    <property type="project" value="UniProtKB"/>
</dbReference>
<dbReference type="GO" id="GO:0045657">
    <property type="term" value="P:positive regulation of monocyte differentiation"/>
    <property type="evidence" value="ECO:0000250"/>
    <property type="project" value="UniProtKB"/>
</dbReference>
<dbReference type="GO" id="GO:1900153">
    <property type="term" value="P:positive regulation of nuclear-transcribed mRNA catabolic process, deadenylation-dependent decay"/>
    <property type="evidence" value="ECO:0000314"/>
    <property type="project" value="UniProtKB"/>
</dbReference>
<dbReference type="GO" id="GO:0003342">
    <property type="term" value="P:proepicardium development"/>
    <property type="evidence" value="ECO:0000266"/>
    <property type="project" value="RGD"/>
</dbReference>
<dbReference type="GO" id="GO:0045577">
    <property type="term" value="P:regulation of B cell differentiation"/>
    <property type="evidence" value="ECO:0000250"/>
    <property type="project" value="UniProtKB"/>
</dbReference>
<dbReference type="GO" id="GO:0010468">
    <property type="term" value="P:regulation of gene expression"/>
    <property type="evidence" value="ECO:0000250"/>
    <property type="project" value="UniProtKB"/>
</dbReference>
<dbReference type="GO" id="GO:1902172">
    <property type="term" value="P:regulation of keratinocyte apoptotic process"/>
    <property type="evidence" value="ECO:0000250"/>
    <property type="project" value="UniProtKB"/>
</dbReference>
<dbReference type="GO" id="GO:0045616">
    <property type="term" value="P:regulation of keratinocyte differentiation"/>
    <property type="evidence" value="ECO:0000250"/>
    <property type="project" value="UniProtKB"/>
</dbReference>
<dbReference type="GO" id="GO:0010837">
    <property type="term" value="P:regulation of keratinocyte proliferation"/>
    <property type="evidence" value="ECO:0000250"/>
    <property type="project" value="UniProtKB"/>
</dbReference>
<dbReference type="GO" id="GO:0031440">
    <property type="term" value="P:regulation of mRNA 3'-end processing"/>
    <property type="evidence" value="ECO:0000266"/>
    <property type="project" value="RGD"/>
</dbReference>
<dbReference type="GO" id="GO:0043488">
    <property type="term" value="P:regulation of mRNA stability"/>
    <property type="evidence" value="ECO:0000314"/>
    <property type="project" value="UniProtKB"/>
</dbReference>
<dbReference type="GO" id="GO:0045661">
    <property type="term" value="P:regulation of myoblast differentiation"/>
    <property type="evidence" value="ECO:0000250"/>
    <property type="project" value="UniProtKB"/>
</dbReference>
<dbReference type="GO" id="GO:0072091">
    <property type="term" value="P:regulation of stem cell proliferation"/>
    <property type="evidence" value="ECO:0000250"/>
    <property type="project" value="UniProtKB"/>
</dbReference>
<dbReference type="GO" id="GO:0006417">
    <property type="term" value="P:regulation of translation"/>
    <property type="evidence" value="ECO:0000266"/>
    <property type="project" value="RGD"/>
</dbReference>
<dbReference type="GO" id="GO:0009611">
    <property type="term" value="P:response to wounding"/>
    <property type="evidence" value="ECO:0000250"/>
    <property type="project" value="UniProtKB"/>
</dbReference>
<dbReference type="GO" id="GO:0060712">
    <property type="term" value="P:spongiotrophoblast layer development"/>
    <property type="evidence" value="ECO:0000266"/>
    <property type="project" value="RGD"/>
</dbReference>
<dbReference type="GO" id="GO:0033077">
    <property type="term" value="P:T cell differentiation in thymus"/>
    <property type="evidence" value="ECO:0000250"/>
    <property type="project" value="UniProtKB"/>
</dbReference>
<dbReference type="GO" id="GO:0001570">
    <property type="term" value="P:vasculogenesis"/>
    <property type="evidence" value="ECO:0000266"/>
    <property type="project" value="RGD"/>
</dbReference>
<dbReference type="FunFam" id="4.10.1000.10:FF:000001">
    <property type="entry name" value="zinc finger CCCH domain-containing protein 15-like"/>
    <property type="match status" value="1"/>
</dbReference>
<dbReference type="FunFam" id="4.10.1000.10:FF:000002">
    <property type="entry name" value="Zinc finger protein 36, C3H1 type-like 1"/>
    <property type="match status" value="1"/>
</dbReference>
<dbReference type="Gene3D" id="4.10.1000.10">
    <property type="entry name" value="Zinc finger, CCCH-type"/>
    <property type="match status" value="2"/>
</dbReference>
<dbReference type="InterPro" id="IPR007635">
    <property type="entry name" value="Tis11B_N"/>
</dbReference>
<dbReference type="InterPro" id="IPR045877">
    <property type="entry name" value="ZFP36-like"/>
</dbReference>
<dbReference type="InterPro" id="IPR000571">
    <property type="entry name" value="Znf_CCCH"/>
</dbReference>
<dbReference type="InterPro" id="IPR036855">
    <property type="entry name" value="Znf_CCCH_sf"/>
</dbReference>
<dbReference type="PANTHER" id="PTHR12547">
    <property type="entry name" value="CCCH ZINC FINGER/TIS11-RELATED"/>
    <property type="match status" value="1"/>
</dbReference>
<dbReference type="PANTHER" id="PTHR12547:SF53">
    <property type="entry name" value="MRNA DECAY ACTIVATOR PROTEIN ZFP36L1"/>
    <property type="match status" value="1"/>
</dbReference>
<dbReference type="Pfam" id="PF04553">
    <property type="entry name" value="Tis11B_N"/>
    <property type="match status" value="1"/>
</dbReference>
<dbReference type="Pfam" id="PF00642">
    <property type="entry name" value="zf-CCCH"/>
    <property type="match status" value="2"/>
</dbReference>
<dbReference type="SMART" id="SM00356">
    <property type="entry name" value="ZnF_C3H1"/>
    <property type="match status" value="2"/>
</dbReference>
<dbReference type="SUPFAM" id="SSF90229">
    <property type="entry name" value="CCCH zinc finger"/>
    <property type="match status" value="2"/>
</dbReference>
<dbReference type="PROSITE" id="PS50103">
    <property type="entry name" value="ZF_C3H1"/>
    <property type="match status" value="2"/>
</dbReference>
<proteinExistence type="evidence at protein level"/>
<protein>
    <recommendedName>
        <fullName evidence="10">mRNA decay activator protein ZFP36L1</fullName>
    </recommendedName>
    <alternativeName>
        <fullName evidence="2">Butyrate response factor 1</fullName>
    </alternativeName>
    <alternativeName>
        <fullName evidence="10">EGF-inducible protein CMG1</fullName>
    </alternativeName>
    <alternativeName>
        <fullName evidence="1">TPA-induced sequence 11b</fullName>
    </alternativeName>
    <alternativeName>
        <fullName evidence="11">Zinc finger protein 36, C3H1 type-like 1</fullName>
        <shortName evidence="11">ZFP36-like 1</shortName>
    </alternativeName>
</protein>
<comment type="function">
    <text evidence="1 2 5 6 7">Zinc-finger RNA-binding protein that destabilizes several cytoplasmic AU-rich element (ARE)-containing mRNA transcripts by promoting their poly(A) tail removal or deadenylation, and hence provide a mechanism for attenuating protein synthesis (PubMed:10751406, PubMed:12748283). Acts as a 3'-untranslated region (UTR) ARE mRNA-binding adapter protein to communicate signaling events to the mRNA decay machinery (PubMed:12748283). Functions by recruiting the CCR4-NOT deadenylase complex and components of the cytoplasmic RNA decay machinery to the bound ARE-containing mRNAs, and hence promotes ARE-mediated mRNA deadenylation and decay processes (PubMed:12748283). Also induces the degradation of ARE-containing mRNAs even in absence of poly(A) tail (PubMed:11279239). Binds to 3'-UTR ARE of numerous mRNAs (PubMed:10751406). Positively regulates early adipogenesis by promoting ARE-mediated mRNA decay of immediate early genes (IEGs). Promotes ARE-mediated mRNA decay of mineralocorticoid receptor NR3C2 mRNA in response to hypertonic stress. Negatively regulates hematopoietic/erythroid cell differentiation by promoting ARE-mediated mRNA decay of the transcription factor STAT5B mRNA. Positively regulates monocyte/macrophage cell differentiation by promoting ARE-mediated mRNA decay of the cyclin-dependent kinase CDK6 mRNA. Promotes degradation of ARE-containing pluripotency-associated mRNAs in embryonic stem cells (ESCs), such as NANOG, through a fibroblast growth factor (FGF)-induced MAPK-dependent signaling pathway, and hence attenuates ESC self-renewal and positively regulates mesendoderm differentiation. May play a role in mediating pro-apoptotic effects in malignant B-cells by promoting ARE-mediated mRNA decay of BCL2 mRNA. In association with ZFP36L2 maintains quiescence on developing B lymphocytes by promoting ARE-mediated decay of several mRNAs encoding cell cycle regulators that help B cells progress through the cell cycle, and hence ensuring accurate variable-diversity-joining (VDJ) recombination and functional immune cell formation. Together with ZFP36L2 is also necessary for thymocyte development and prevention of T-cell acute lymphoblastic leukemia (T-ALL) transformation by promoting ARE-mediated mRNA decay of the oncogenic transcription factor NOTCH1 mRNA. Participates in the delivery of target ARE-mRNAs to processing bodies (PBs). In addition to its cytosolic mRNA-decay function, plays a role in the regulation of nuclear mRNA 3'-end processing; modulates mRNA 3'-end maturation efficiency of the DLL4 mRNA through binding with an ARE embedded in a weak noncanonical polyadenylation (poly(A)) signal in endothelial cells. Also involved in the regulation of stress granule (SG) and P-body (PB) formation and fusion. Plays a role in vasculogenesis and endocardial development. Plays a role in the regulation of keratinocyte proliferation, differentiation and apoptosis. Plays a role in myoblast cell differentiation (By similarity).</text>
</comment>
<comment type="subunit">
    <text evidence="1 2">Associates with the cytoplasmic CCR4-NOT deadenylase and RNA exosome complexes to trigger ARE-containing mRNA deadenylation and decay processes. Interacts with CNOT1. Interacts (via N-terminus) with CNOT6. Interacts with CNOT7; this interaction is inhibited in response to phorbol 12-myristate 13-acetate (PMA) treatment in a p38 MAPK-dependent manner. Interacts with DCP1A. Interacts (via N-terminus) with DCP2. Interacts (via N-terminus) with EXOSC2. Interacts with XRN1. Interacts (via phosphorylated form) with YWHAB; this interaction occurs in a protein kinase AKT1-dependent manner. Interacts (via phosphorylated form) with YWHAZ; this interaction occurs in a p38 MAPK- and AKT-signaling pathways.</text>
</comment>
<comment type="subcellular location">
    <subcellularLocation>
        <location evidence="2">Nucleus</location>
    </subcellularLocation>
    <subcellularLocation>
        <location evidence="2">Cytoplasm</location>
    </subcellularLocation>
    <subcellularLocation>
        <location evidence="2">Cytoplasmic granule</location>
    </subcellularLocation>
    <subcellularLocation>
        <location evidence="2">Cytoplasm</location>
        <location evidence="2">P-body</location>
    </subcellularLocation>
    <text evidence="1 2">Shuttles between the nucleus and the cytoplasm in a XPO1/CRM1-dependent manner. Component of cytoplasmic stress granules. Localizes in processing bodies (PBs).</text>
</comment>
<comment type="PTM">
    <text evidence="1 2 8">Phosphorylated. Phosphorylated by RPS6KA1 at Ser-334 upon phorbol 12-myristate 13-acetate (PMA) treatment; this phosphorylation results in dissociation of the CCR4-NOT deadenylase complex and induces p38 MAPK-mediated stabilization of the low-density lipoprotein receptor LDLR mRNA. Phosphorylated by protein kinase AKT1 at Ser-92 and Ser-203 in response to insulin; these phosphorylations stabilize ZFP36L1, increase the association with 14-3-3 proteins and mediate ARE-containing mRNA stabilization. AKT1-mediated phosphorylation at Ser-92 does not impair ARE-containing RNA-binding. Phosphorylated at Ser-54, Ser-92 and Ser-203 by MAPKAPK2; these phosphorylations increase the association with 14-3-3 proteins and mediate ARE-containing mRNA stabilization in a protein kinase AKT1-independent manner. MAPKAPK2-mediated phosphorylations at Ser-54, Ser-92 and Ser-203 do not impair ARE-containing RNA-binding (By similarity). Phosphorylations increase the association with 14-3-3 proteins and mediate ARE-containing mRNA stabilization during early adipogenesis in a p38 MAPK- and AKT-dependent manner (By similarity). Phosphorylated by protein kinase AKT1 at Ser-92 (PubMed:15538381).</text>
</comment>
<comment type="PTM">
    <text evidence="2">Ubiquitinated. Ubiquitination leads to proteasomal degradation, a process inhibited by phosphorylations at Ser-90, Ser-92 and Ser-203.</text>
</comment>
<evidence type="ECO:0000250" key="1">
    <source>
        <dbReference type="UniProtKB" id="P23950"/>
    </source>
</evidence>
<evidence type="ECO:0000250" key="2">
    <source>
        <dbReference type="UniProtKB" id="Q07352"/>
    </source>
</evidence>
<evidence type="ECO:0000255" key="3">
    <source>
        <dbReference type="PROSITE-ProRule" id="PRU00723"/>
    </source>
</evidence>
<evidence type="ECO:0000256" key="4">
    <source>
        <dbReference type="SAM" id="MobiDB-lite"/>
    </source>
</evidence>
<evidence type="ECO:0000269" key="5">
    <source>
    </source>
</evidence>
<evidence type="ECO:0000269" key="6">
    <source>
    </source>
</evidence>
<evidence type="ECO:0000269" key="7">
    <source>
    </source>
</evidence>
<evidence type="ECO:0000269" key="8">
    <source>
    </source>
</evidence>
<evidence type="ECO:0000303" key="9">
    <source>
    </source>
</evidence>
<evidence type="ECO:0000305" key="10"/>
<evidence type="ECO:0000312" key="11">
    <source>
        <dbReference type="RGD" id="62009"/>
    </source>
</evidence>
<sequence>MTTTLVSATIFDLSEVLCKGNKMLNYSTPSAGGCLLDRKAVGTPAGGGFPRRHSVTLPSSKFHQNQLLSSLKGEPAPTLSSRDSRFRDRSFSEGGERLLPTQKQPGSGQVNSSRYKTELCRPFEENGACKYGDKCQFAHGIHELRSLTRHPKYKTELCRTFHTIGFCPYGPRCHFIHNAEERRALAGGRDLSADRPRLQHSFSFAGFPSAAATAAATGLLDSPTSITPPPILSADDLLGSPTLPDGTNNPFAFSSQELASLFAPSMGLPGGGSPTTFLFRPMSESPHMFDSPPSPQDSLSDHEGYLSSSSSSHSGSDSPTLDNSRRLPIFSRLSISDD</sequence>
<accession>P17431</accession>
<accession>Q6LAU8</accession>